<accession>Q6MN25</accession>
<protein>
    <recommendedName>
        <fullName evidence="1">UPF0391 membrane protein Bd1438</fullName>
    </recommendedName>
</protein>
<reference key="1">
    <citation type="journal article" date="2004" name="Science">
        <title>A predator unmasked: life cycle of Bdellovibrio bacteriovorus from a genomic perspective.</title>
        <authorList>
            <person name="Rendulic S."/>
            <person name="Jagtap P."/>
            <person name="Rosinus A."/>
            <person name="Eppinger M."/>
            <person name="Baar C."/>
            <person name="Lanz C."/>
            <person name="Keller H."/>
            <person name="Lambert C."/>
            <person name="Evans K.J."/>
            <person name="Goesmann A."/>
            <person name="Meyer F."/>
            <person name="Sockett R.E."/>
            <person name="Schuster S.C."/>
        </authorList>
    </citation>
    <scope>NUCLEOTIDE SEQUENCE [LARGE SCALE GENOMIC DNA]</scope>
    <source>
        <strain>ATCC 15356 / DSM 50701 / NCIMB 9529 / HD100</strain>
    </source>
</reference>
<gene>
    <name type="ordered locus">Bd1438</name>
</gene>
<dbReference type="EMBL" id="BX842649">
    <property type="protein sequence ID" value="CAE79327.1"/>
    <property type="molecule type" value="Genomic_DNA"/>
</dbReference>
<dbReference type="RefSeq" id="WP_011163929.1">
    <property type="nucleotide sequence ID" value="NC_005363.1"/>
</dbReference>
<dbReference type="STRING" id="264462.Bd1438"/>
<dbReference type="GeneID" id="93014692"/>
<dbReference type="KEGG" id="bba:Bd1438"/>
<dbReference type="eggNOG" id="ENOG5032J8F">
    <property type="taxonomic scope" value="Bacteria"/>
</dbReference>
<dbReference type="HOGENOM" id="CLU_187346_3_2_7"/>
<dbReference type="Proteomes" id="UP000008080">
    <property type="component" value="Chromosome"/>
</dbReference>
<dbReference type="GO" id="GO:0005886">
    <property type="term" value="C:plasma membrane"/>
    <property type="evidence" value="ECO:0007669"/>
    <property type="project" value="UniProtKB-SubCell"/>
</dbReference>
<dbReference type="HAMAP" id="MF_01361">
    <property type="entry name" value="UPF0391"/>
    <property type="match status" value="1"/>
</dbReference>
<dbReference type="InterPro" id="IPR009760">
    <property type="entry name" value="DUF1328"/>
</dbReference>
<dbReference type="NCBIfam" id="NF010229">
    <property type="entry name" value="PRK13682.1-4"/>
    <property type="match status" value="1"/>
</dbReference>
<dbReference type="Pfam" id="PF07043">
    <property type="entry name" value="DUF1328"/>
    <property type="match status" value="1"/>
</dbReference>
<dbReference type="PIRSF" id="PIRSF036466">
    <property type="entry name" value="UCP036466"/>
    <property type="match status" value="1"/>
</dbReference>
<keyword id="KW-1003">Cell membrane</keyword>
<keyword id="KW-0472">Membrane</keyword>
<keyword id="KW-1185">Reference proteome</keyword>
<keyword id="KW-0812">Transmembrane</keyword>
<keyword id="KW-1133">Transmembrane helix</keyword>
<proteinExistence type="inferred from homology"/>
<sequence length="56" mass="5942">MLRAAIAFFIIAIVAYIFGASGVAGMSVEIGRILLFVFLALAIISFVINLVSGRKP</sequence>
<evidence type="ECO:0000255" key="1">
    <source>
        <dbReference type="HAMAP-Rule" id="MF_01361"/>
    </source>
</evidence>
<name>Y1438_BDEBA</name>
<comment type="subcellular location">
    <subcellularLocation>
        <location evidence="1">Cell membrane</location>
        <topology evidence="1">Multi-pass membrane protein</topology>
    </subcellularLocation>
</comment>
<comment type="similarity">
    <text evidence="1">Belongs to the UPF0391 family.</text>
</comment>
<organism>
    <name type="scientific">Bdellovibrio bacteriovorus (strain ATCC 15356 / DSM 50701 / NCIMB 9529 / HD100)</name>
    <dbReference type="NCBI Taxonomy" id="264462"/>
    <lineage>
        <taxon>Bacteria</taxon>
        <taxon>Pseudomonadati</taxon>
        <taxon>Bdellovibrionota</taxon>
        <taxon>Bdellovibrionia</taxon>
        <taxon>Bdellovibrionales</taxon>
        <taxon>Pseudobdellovibrionaceae</taxon>
        <taxon>Bdellovibrio</taxon>
    </lineage>
</organism>
<feature type="chain" id="PRO_0000256711" description="UPF0391 membrane protein Bd1438">
    <location>
        <begin position="1"/>
        <end position="56"/>
    </location>
</feature>
<feature type="transmembrane region" description="Helical" evidence="1">
    <location>
        <begin position="4"/>
        <end position="24"/>
    </location>
</feature>
<feature type="transmembrane region" description="Helical" evidence="1">
    <location>
        <begin position="33"/>
        <end position="53"/>
    </location>
</feature>